<protein>
    <recommendedName>
        <fullName>Ubiquitin-conjugating enzyme E2 E3</fullName>
        <ecNumber>2.3.2.23</ecNumber>
    </recommendedName>
    <alternativeName>
        <fullName>E2 ubiquitin-conjugating enzyme E3</fullName>
    </alternativeName>
    <alternativeName>
        <fullName>Ubiquitin carrier protein E3</fullName>
    </alternativeName>
    <alternativeName>
        <fullName>Ubiquitin-protein ligase E3</fullName>
    </alternativeName>
</protein>
<comment type="function">
    <text evidence="2">Accepts ubiquitin from the E1 complex and catalyzes its covalent attachment to other proteins. In vitro catalyzes 'Lys-11'- and 'Lys-48'-, as well as 'Lys-63'-linked polyubiquitination. Participates in the regulation of transepithelial sodium transport in renal cells.</text>
</comment>
<comment type="catalytic activity">
    <reaction evidence="3 4">
        <text>S-ubiquitinyl-[E1 ubiquitin-activating enzyme]-L-cysteine + [E2 ubiquitin-conjugating enzyme]-L-cysteine = [E1 ubiquitin-activating enzyme]-L-cysteine + S-ubiquitinyl-[E2 ubiquitin-conjugating enzyme]-L-cysteine.</text>
        <dbReference type="EC" id="2.3.2.23"/>
    </reaction>
</comment>
<comment type="pathway">
    <text evidence="3">Protein modification; protein ubiquitination.</text>
</comment>
<comment type="subunit">
    <text evidence="1">The ubiquitin-loaded form interacts specifically with importin-11 (IPO11), leading to its import into the nucleus. Interacts with NEDD4L.</text>
</comment>
<comment type="subcellular location">
    <subcellularLocation>
        <location evidence="2">Nucleus</location>
    </subcellularLocation>
    <subcellularLocation>
        <location evidence="2">Cytoplasm</location>
    </subcellularLocation>
    <text evidence="2">Shuttles between the nucleus and cytoplasm in a IPO11-dependent manner.</text>
</comment>
<comment type="similarity">
    <text evidence="3">Belongs to the ubiquitin-conjugating enzyme family.</text>
</comment>
<dbReference type="EC" id="2.3.2.23"/>
<dbReference type="EMBL" id="BC111218">
    <property type="protein sequence ID" value="AAI11219.1"/>
    <property type="molecule type" value="mRNA"/>
</dbReference>
<dbReference type="RefSeq" id="NP_001073251.1">
    <property type="nucleotide sequence ID" value="NM_001079783.1"/>
</dbReference>
<dbReference type="RefSeq" id="XP_024831463.1">
    <property type="nucleotide sequence ID" value="XM_024975695.2"/>
</dbReference>
<dbReference type="RefSeq" id="XP_024831471.1">
    <property type="nucleotide sequence ID" value="XM_024975703.2"/>
</dbReference>
<dbReference type="RefSeq" id="XP_059731234.1">
    <property type="nucleotide sequence ID" value="XM_059875251.1"/>
</dbReference>
<dbReference type="RefSeq" id="XP_059731242.1">
    <property type="nucleotide sequence ID" value="XM_059875259.1"/>
</dbReference>
<dbReference type="SMR" id="Q2T9X7"/>
<dbReference type="FunCoup" id="Q2T9X7">
    <property type="interactions" value="2843"/>
</dbReference>
<dbReference type="STRING" id="9913.ENSBTAP00000053293"/>
<dbReference type="PaxDb" id="9913-ENSBTAP00000053293"/>
<dbReference type="GeneID" id="534349"/>
<dbReference type="KEGG" id="bta:534349"/>
<dbReference type="CTD" id="10477"/>
<dbReference type="VEuPathDB" id="HostDB:ENSBTAG00000043956"/>
<dbReference type="eggNOG" id="KOG0417">
    <property type="taxonomic scope" value="Eukaryota"/>
</dbReference>
<dbReference type="InParanoid" id="Q2T9X7"/>
<dbReference type="OMA" id="GDRAKHD"/>
<dbReference type="OrthoDB" id="7851174at2759"/>
<dbReference type="Reactome" id="R-BTA-8866652">
    <property type="pathway name" value="Synthesis of active ubiquitin: roles of E1 and E2 enzymes"/>
</dbReference>
<dbReference type="Reactome" id="R-BTA-983168">
    <property type="pathway name" value="Antigen processing: Ubiquitination &amp; Proteasome degradation"/>
</dbReference>
<dbReference type="UniPathway" id="UPA00143"/>
<dbReference type="Proteomes" id="UP000009136">
    <property type="component" value="Chromosome 2"/>
</dbReference>
<dbReference type="Bgee" id="ENSBTAG00000043956">
    <property type="expression patterns" value="Expressed in Ammon's horn and 106 other cell types or tissues"/>
</dbReference>
<dbReference type="GO" id="GO:0005737">
    <property type="term" value="C:cytoplasm"/>
    <property type="evidence" value="ECO:0007669"/>
    <property type="project" value="UniProtKB-SubCell"/>
</dbReference>
<dbReference type="GO" id="GO:0005634">
    <property type="term" value="C:nucleus"/>
    <property type="evidence" value="ECO:0000318"/>
    <property type="project" value="GO_Central"/>
</dbReference>
<dbReference type="GO" id="GO:0005524">
    <property type="term" value="F:ATP binding"/>
    <property type="evidence" value="ECO:0007669"/>
    <property type="project" value="UniProtKB-KW"/>
</dbReference>
<dbReference type="GO" id="GO:0061631">
    <property type="term" value="F:ubiquitin conjugating enzyme activity"/>
    <property type="evidence" value="ECO:0000318"/>
    <property type="project" value="GO_Central"/>
</dbReference>
<dbReference type="GO" id="GO:0004842">
    <property type="term" value="F:ubiquitin-protein transferase activity"/>
    <property type="evidence" value="ECO:0000250"/>
    <property type="project" value="UniProtKB"/>
</dbReference>
<dbReference type="GO" id="GO:0070979">
    <property type="term" value="P:protein K11-linked ubiquitination"/>
    <property type="evidence" value="ECO:0000250"/>
    <property type="project" value="UniProtKB"/>
</dbReference>
<dbReference type="GO" id="GO:0070936">
    <property type="term" value="P:protein K48-linked ubiquitination"/>
    <property type="evidence" value="ECO:0000250"/>
    <property type="project" value="UniProtKB"/>
</dbReference>
<dbReference type="GO" id="GO:0070534">
    <property type="term" value="P:protein K63-linked ubiquitination"/>
    <property type="evidence" value="ECO:0000250"/>
    <property type="project" value="UniProtKB"/>
</dbReference>
<dbReference type="CDD" id="cd23793">
    <property type="entry name" value="UBCc_UBE2E"/>
    <property type="match status" value="1"/>
</dbReference>
<dbReference type="FunFam" id="3.10.110.10:FF:000003">
    <property type="entry name" value="Ubiquitin-conjugating enzyme E2 E3"/>
    <property type="match status" value="1"/>
</dbReference>
<dbReference type="Gene3D" id="3.10.110.10">
    <property type="entry name" value="Ubiquitin Conjugating Enzyme"/>
    <property type="match status" value="1"/>
</dbReference>
<dbReference type="InterPro" id="IPR000608">
    <property type="entry name" value="UBQ-conjugat_E2_core"/>
</dbReference>
<dbReference type="InterPro" id="IPR023313">
    <property type="entry name" value="UBQ-conjugating_AS"/>
</dbReference>
<dbReference type="InterPro" id="IPR016135">
    <property type="entry name" value="UBQ-conjugating_enzyme/RWD"/>
</dbReference>
<dbReference type="PANTHER" id="PTHR24068">
    <property type="entry name" value="UBIQUITIN-CONJUGATING ENZYME E2"/>
    <property type="match status" value="1"/>
</dbReference>
<dbReference type="Pfam" id="PF00179">
    <property type="entry name" value="UQ_con"/>
    <property type="match status" value="1"/>
</dbReference>
<dbReference type="SMART" id="SM00212">
    <property type="entry name" value="UBCc"/>
    <property type="match status" value="1"/>
</dbReference>
<dbReference type="SUPFAM" id="SSF54495">
    <property type="entry name" value="UBC-like"/>
    <property type="match status" value="1"/>
</dbReference>
<dbReference type="PROSITE" id="PS00183">
    <property type="entry name" value="UBC_1"/>
    <property type="match status" value="1"/>
</dbReference>
<dbReference type="PROSITE" id="PS50127">
    <property type="entry name" value="UBC_2"/>
    <property type="match status" value="1"/>
</dbReference>
<accession>Q2T9X7</accession>
<keyword id="KW-0007">Acetylation</keyword>
<keyword id="KW-0067">ATP-binding</keyword>
<keyword id="KW-0963">Cytoplasm</keyword>
<keyword id="KW-0341">Growth regulation</keyword>
<keyword id="KW-0547">Nucleotide-binding</keyword>
<keyword id="KW-0539">Nucleus</keyword>
<keyword id="KW-0597">Phosphoprotein</keyword>
<keyword id="KW-1185">Reference proteome</keyword>
<keyword id="KW-0808">Transferase</keyword>
<keyword id="KW-0833">Ubl conjugation pathway</keyword>
<feature type="initiator methionine" description="Removed" evidence="2">
    <location>
        <position position="1"/>
    </location>
</feature>
<feature type="chain" id="PRO_0000245036" description="Ubiquitin-conjugating enzyme E2 E3">
    <location>
        <begin position="2"/>
        <end position="207"/>
    </location>
</feature>
<feature type="domain" description="UBC core" evidence="3">
    <location>
        <begin position="61"/>
        <end position="207"/>
    </location>
</feature>
<feature type="region of interest" description="Disordered" evidence="5">
    <location>
        <begin position="1"/>
        <end position="63"/>
    </location>
</feature>
<feature type="compositionally biased region" description="Basic and acidic residues" evidence="5">
    <location>
        <begin position="1"/>
        <end position="10"/>
    </location>
</feature>
<feature type="compositionally biased region" description="Low complexity" evidence="5">
    <location>
        <begin position="50"/>
        <end position="63"/>
    </location>
</feature>
<feature type="active site" description="Glycyl thioester intermediate" evidence="3">
    <location>
        <position position="145"/>
    </location>
</feature>
<feature type="modified residue" description="N-acetylserine" evidence="2">
    <location>
        <position position="2"/>
    </location>
</feature>
<feature type="modified residue" description="Phosphoserine" evidence="2">
    <location>
        <position position="8"/>
    </location>
</feature>
<sequence length="207" mass="22913">MSSDRQRSDDESPSTSSGSSDADQRDPAAPEPEEQEERKPSATQQKKNTKLSSKTTAKLSTSAKRIQKELAEITLDPPPNCSAGPKGDNIYEWRSTILGPPGSVYEGGVFFLDITFSSDYPFKPPKVTFRTRIYHCNINSQGVICLDILKDNWSPALTISKVLLSICSLLTDCNPADPLVGSIATQYLTNRAEHDRIARQWTKRYAT</sequence>
<gene>
    <name type="primary">UBE2E3</name>
</gene>
<name>UB2E3_BOVIN</name>
<organism>
    <name type="scientific">Bos taurus</name>
    <name type="common">Bovine</name>
    <dbReference type="NCBI Taxonomy" id="9913"/>
    <lineage>
        <taxon>Eukaryota</taxon>
        <taxon>Metazoa</taxon>
        <taxon>Chordata</taxon>
        <taxon>Craniata</taxon>
        <taxon>Vertebrata</taxon>
        <taxon>Euteleostomi</taxon>
        <taxon>Mammalia</taxon>
        <taxon>Eutheria</taxon>
        <taxon>Laurasiatheria</taxon>
        <taxon>Artiodactyla</taxon>
        <taxon>Ruminantia</taxon>
        <taxon>Pecora</taxon>
        <taxon>Bovidae</taxon>
        <taxon>Bovinae</taxon>
        <taxon>Bos</taxon>
    </lineage>
</organism>
<proteinExistence type="evidence at transcript level"/>
<evidence type="ECO:0000250" key="1">
    <source>
        <dbReference type="UniProtKB" id="P52483"/>
    </source>
</evidence>
<evidence type="ECO:0000250" key="2">
    <source>
        <dbReference type="UniProtKB" id="Q969T4"/>
    </source>
</evidence>
<evidence type="ECO:0000255" key="3">
    <source>
        <dbReference type="PROSITE-ProRule" id="PRU00388"/>
    </source>
</evidence>
<evidence type="ECO:0000255" key="4">
    <source>
        <dbReference type="PROSITE-ProRule" id="PRU10133"/>
    </source>
</evidence>
<evidence type="ECO:0000256" key="5">
    <source>
        <dbReference type="SAM" id="MobiDB-lite"/>
    </source>
</evidence>
<reference key="1">
    <citation type="submission" date="2005-12" db="EMBL/GenBank/DDBJ databases">
        <authorList>
            <consortium name="NIH - Mammalian Gene Collection (MGC) project"/>
        </authorList>
    </citation>
    <scope>NUCLEOTIDE SEQUENCE [LARGE SCALE MRNA]</scope>
    <source>
        <strain>Crossbred X Angus</strain>
        <tissue>Liver</tissue>
    </source>
</reference>